<accession>A0A1B0GUA6</accession>
<name>CC195_HUMAN</name>
<protein>
    <recommendedName>
        <fullName evidence="3">Coiled-coil domain-containing protein 195</fullName>
    </recommendedName>
</protein>
<proteinExistence type="predicted"/>
<feature type="chain" id="PRO_0000441409" description="Coiled-coil domain-containing protein 195">
    <location>
        <begin position="1"/>
        <end position="201"/>
    </location>
</feature>
<feature type="region of interest" description="Disordered" evidence="2">
    <location>
        <begin position="28"/>
        <end position="72"/>
    </location>
</feature>
<feature type="region of interest" description="Disordered" evidence="2">
    <location>
        <begin position="179"/>
        <end position="201"/>
    </location>
</feature>
<feature type="coiled-coil region" evidence="1">
    <location>
        <begin position="4"/>
        <end position="38"/>
    </location>
</feature>
<feature type="compositionally biased region" description="Low complexity" evidence="2">
    <location>
        <begin position="179"/>
        <end position="188"/>
    </location>
</feature>
<feature type="compositionally biased region" description="Polar residues" evidence="2">
    <location>
        <begin position="189"/>
        <end position="201"/>
    </location>
</feature>
<reference key="1">
    <citation type="journal article" date="2005" name="Nature">
        <title>Generation and annotation of the DNA sequences of human chromosomes 2 and 4.</title>
        <authorList>
            <person name="Hillier L.W."/>
            <person name="Graves T.A."/>
            <person name="Fulton R.S."/>
            <person name="Fulton L.A."/>
            <person name="Pepin K.H."/>
            <person name="Minx P."/>
            <person name="Wagner-McPherson C."/>
            <person name="Layman D."/>
            <person name="Wylie K."/>
            <person name="Sekhon M."/>
            <person name="Becker M.C."/>
            <person name="Fewell G.A."/>
            <person name="Delehaunty K.D."/>
            <person name="Miner T.L."/>
            <person name="Nash W.E."/>
            <person name="Kremitzki C."/>
            <person name="Oddy L."/>
            <person name="Du H."/>
            <person name="Sun H."/>
            <person name="Bradshaw-Cordum H."/>
            <person name="Ali J."/>
            <person name="Carter J."/>
            <person name="Cordes M."/>
            <person name="Harris A."/>
            <person name="Isak A."/>
            <person name="van Brunt A."/>
            <person name="Nguyen C."/>
            <person name="Du F."/>
            <person name="Courtney L."/>
            <person name="Kalicki J."/>
            <person name="Ozersky P."/>
            <person name="Abbott S."/>
            <person name="Armstrong J."/>
            <person name="Belter E.A."/>
            <person name="Caruso L."/>
            <person name="Cedroni M."/>
            <person name="Cotton M."/>
            <person name="Davidson T."/>
            <person name="Desai A."/>
            <person name="Elliott G."/>
            <person name="Erb T."/>
            <person name="Fronick C."/>
            <person name="Gaige T."/>
            <person name="Haakenson W."/>
            <person name="Haglund K."/>
            <person name="Holmes A."/>
            <person name="Harkins R."/>
            <person name="Kim K."/>
            <person name="Kruchowski S.S."/>
            <person name="Strong C.M."/>
            <person name="Grewal N."/>
            <person name="Goyea E."/>
            <person name="Hou S."/>
            <person name="Levy A."/>
            <person name="Martinka S."/>
            <person name="Mead K."/>
            <person name="McLellan M.D."/>
            <person name="Meyer R."/>
            <person name="Randall-Maher J."/>
            <person name="Tomlinson C."/>
            <person name="Dauphin-Kohlberg S."/>
            <person name="Kozlowicz-Reilly A."/>
            <person name="Shah N."/>
            <person name="Swearengen-Shahid S."/>
            <person name="Snider J."/>
            <person name="Strong J.T."/>
            <person name="Thompson J."/>
            <person name="Yoakum M."/>
            <person name="Leonard S."/>
            <person name="Pearman C."/>
            <person name="Trani L."/>
            <person name="Radionenko M."/>
            <person name="Waligorski J.E."/>
            <person name="Wang C."/>
            <person name="Rock S.M."/>
            <person name="Tin-Wollam A.-M."/>
            <person name="Maupin R."/>
            <person name="Latreille P."/>
            <person name="Wendl M.C."/>
            <person name="Yang S.-P."/>
            <person name="Pohl C."/>
            <person name="Wallis J.W."/>
            <person name="Spieth J."/>
            <person name="Bieri T.A."/>
            <person name="Berkowicz N."/>
            <person name="Nelson J.O."/>
            <person name="Osborne J."/>
            <person name="Ding L."/>
            <person name="Meyer R."/>
            <person name="Sabo A."/>
            <person name="Shotland Y."/>
            <person name="Sinha P."/>
            <person name="Wohldmann P.E."/>
            <person name="Cook L.L."/>
            <person name="Hickenbotham M.T."/>
            <person name="Eldred J."/>
            <person name="Williams D."/>
            <person name="Jones T.A."/>
            <person name="She X."/>
            <person name="Ciccarelli F.D."/>
            <person name="Izaurralde E."/>
            <person name="Taylor J."/>
            <person name="Schmutz J."/>
            <person name="Myers R.M."/>
            <person name="Cox D.R."/>
            <person name="Huang X."/>
            <person name="McPherson J.D."/>
            <person name="Mardis E.R."/>
            <person name="Clifton S.W."/>
            <person name="Warren W.C."/>
            <person name="Chinwalla A.T."/>
            <person name="Eddy S.R."/>
            <person name="Marra M.A."/>
            <person name="Ovcharenko I."/>
            <person name="Furey T.S."/>
            <person name="Miller W."/>
            <person name="Eichler E.E."/>
            <person name="Bork P."/>
            <person name="Suyama M."/>
            <person name="Torrents D."/>
            <person name="Waterston R.H."/>
            <person name="Wilson R.K."/>
        </authorList>
    </citation>
    <scope>NUCLEOTIDE SEQUENCE [LARGE SCALE GENOMIC DNA]</scope>
</reference>
<keyword id="KW-0175">Coiled coil</keyword>
<keyword id="KW-1185">Reference proteome</keyword>
<dbReference type="EMBL" id="AC104830">
    <property type="status" value="NOT_ANNOTATED_CDS"/>
    <property type="molecule type" value="Genomic_DNA"/>
</dbReference>
<dbReference type="CCDS" id="CCDS92949.1"/>
<dbReference type="RefSeq" id="NP_001382165.1">
    <property type="nucleotide sequence ID" value="NM_001395236.1"/>
</dbReference>
<dbReference type="SMR" id="A0A1B0GUA6"/>
<dbReference type="GlyGen" id="A0A1B0GUA6">
    <property type="glycosylation" value="1 site, 1 O-linked glycan (1 site)"/>
</dbReference>
<dbReference type="BioMuta" id="CCDC195"/>
<dbReference type="jPOST" id="A0A1B0GUA6"/>
<dbReference type="Ensembl" id="ENST00000638102.1">
    <property type="protein sequence ID" value="ENSP00000490029.1"/>
    <property type="gene ID" value="ENSG00000283428.1"/>
</dbReference>
<dbReference type="GeneID" id="110806281"/>
<dbReference type="MANE-Select" id="ENST00000638102.1">
    <property type="protein sequence ID" value="ENSP00000490029.1"/>
    <property type="RefSeq nucleotide sequence ID" value="NM_001395236.1"/>
    <property type="RefSeq protein sequence ID" value="NP_001382165.1"/>
</dbReference>
<dbReference type="AGR" id="HGNC:53441"/>
<dbReference type="GeneCards" id="CCDC195"/>
<dbReference type="HGNC" id="HGNC:53441">
    <property type="gene designation" value="CCDC195"/>
</dbReference>
<dbReference type="HPA" id="ENSG00000283428">
    <property type="expression patterns" value="Not detected"/>
</dbReference>
<dbReference type="neXtProt" id="NX_A0A1B0GUA6"/>
<dbReference type="OpenTargets" id="ENSG00000283428"/>
<dbReference type="VEuPathDB" id="HostDB:ENSG00000283428"/>
<dbReference type="GeneTree" id="ENSGT00850000133636"/>
<dbReference type="InParanoid" id="A0A1B0GUA6"/>
<dbReference type="OMA" id="PEHVFGC"/>
<dbReference type="OrthoDB" id="8851930at2759"/>
<dbReference type="PAN-GO" id="A0A1B0GUA6">
    <property type="GO annotations" value="0 GO annotations based on evolutionary models"/>
</dbReference>
<dbReference type="Pharos" id="A0A1B0GUA6">
    <property type="development level" value="Tdark"/>
</dbReference>
<dbReference type="Proteomes" id="UP000005640">
    <property type="component" value="Chromosome 2"/>
</dbReference>
<dbReference type="RNAct" id="A0A1B0GUA6">
    <property type="molecule type" value="protein"/>
</dbReference>
<dbReference type="Bgee" id="ENSG00000283428">
    <property type="expression patterns" value="Expressed in sural nerve and 19 other cell types or tissues"/>
</dbReference>
<evidence type="ECO:0000255" key="1"/>
<evidence type="ECO:0000256" key="2">
    <source>
        <dbReference type="SAM" id="MobiDB-lite"/>
    </source>
</evidence>
<evidence type="ECO:0000305" key="3"/>
<evidence type="ECO:0000312" key="4">
    <source>
        <dbReference type="HGNC" id="HGNC:53441"/>
    </source>
</evidence>
<sequence>MEADIQLMRLIQEMRAEIHKLEKENQALRMKLTASSQRASGSGRESGDEREEEAPGQSPATLQGAVSTDAAPAVQEHQGNVMIVRRYSISSSVCSSAVNDPWKSGKSHPKSGILEGQRTLKSLACSPIKKQDMEEKVFATDSLTSNRTSQRASPEHVCGCRDKTKAVSFLLPMDMSSYSKNSSSLKHSPNQATNQLSIIAE</sequence>
<gene>
    <name evidence="4" type="primary">CCDC195</name>
</gene>
<organism>
    <name type="scientific">Homo sapiens</name>
    <name type="common">Human</name>
    <dbReference type="NCBI Taxonomy" id="9606"/>
    <lineage>
        <taxon>Eukaryota</taxon>
        <taxon>Metazoa</taxon>
        <taxon>Chordata</taxon>
        <taxon>Craniata</taxon>
        <taxon>Vertebrata</taxon>
        <taxon>Euteleostomi</taxon>
        <taxon>Mammalia</taxon>
        <taxon>Eutheria</taxon>
        <taxon>Euarchontoglires</taxon>
        <taxon>Primates</taxon>
        <taxon>Haplorrhini</taxon>
        <taxon>Catarrhini</taxon>
        <taxon>Hominidae</taxon>
        <taxon>Homo</taxon>
    </lineage>
</organism>